<comment type="function">
    <text evidence="1">DNA ligase that catalyzes the formation of phosphodiester linkages between 5'-phosphoryl and 3'-hydroxyl groups in double-stranded DNA using NAD as a coenzyme and as the energy source for the reaction. It is essential for DNA replication and repair of damaged DNA.</text>
</comment>
<comment type="catalytic activity">
    <reaction evidence="1">
        <text>NAD(+) + (deoxyribonucleotide)n-3'-hydroxyl + 5'-phospho-(deoxyribonucleotide)m = (deoxyribonucleotide)n+m + AMP + beta-nicotinamide D-nucleotide.</text>
        <dbReference type="EC" id="6.5.1.2"/>
    </reaction>
</comment>
<comment type="cofactor">
    <cofactor evidence="1">
        <name>Mg(2+)</name>
        <dbReference type="ChEBI" id="CHEBI:18420"/>
    </cofactor>
    <cofactor evidence="1">
        <name>Mn(2+)</name>
        <dbReference type="ChEBI" id="CHEBI:29035"/>
    </cofactor>
</comment>
<comment type="similarity">
    <text evidence="1">Belongs to the NAD-dependent DNA ligase family. LigA subfamily.</text>
</comment>
<protein>
    <recommendedName>
        <fullName evidence="1">DNA ligase</fullName>
        <ecNumber evidence="1">6.5.1.2</ecNumber>
    </recommendedName>
    <alternativeName>
        <fullName evidence="1">Polydeoxyribonucleotide synthase [NAD(+)]</fullName>
    </alternativeName>
</protein>
<accession>Q97QT2</accession>
<name>DNLJ_STRPN</name>
<reference key="1">
    <citation type="journal article" date="2001" name="Science">
        <title>Complete genome sequence of a virulent isolate of Streptococcus pneumoniae.</title>
        <authorList>
            <person name="Tettelin H."/>
            <person name="Nelson K.E."/>
            <person name="Paulsen I.T."/>
            <person name="Eisen J.A."/>
            <person name="Read T.D."/>
            <person name="Peterson S.N."/>
            <person name="Heidelberg J.F."/>
            <person name="DeBoy R.T."/>
            <person name="Haft D.H."/>
            <person name="Dodson R.J."/>
            <person name="Durkin A.S."/>
            <person name="Gwinn M.L."/>
            <person name="Kolonay J.F."/>
            <person name="Nelson W.C."/>
            <person name="Peterson J.D."/>
            <person name="Umayam L.A."/>
            <person name="White O."/>
            <person name="Salzberg S.L."/>
            <person name="Lewis M.R."/>
            <person name="Radune D."/>
            <person name="Holtzapple E.K."/>
            <person name="Khouri H.M."/>
            <person name="Wolf A.M."/>
            <person name="Utterback T.R."/>
            <person name="Hansen C.L."/>
            <person name="McDonald L.A."/>
            <person name="Feldblyum T.V."/>
            <person name="Angiuoli S.V."/>
            <person name="Dickinson T."/>
            <person name="Hickey E.K."/>
            <person name="Holt I.E."/>
            <person name="Loftus B.J."/>
            <person name="Yang F."/>
            <person name="Smith H.O."/>
            <person name="Venter J.C."/>
            <person name="Dougherty B.A."/>
            <person name="Morrison D.A."/>
            <person name="Hollingshead S.K."/>
            <person name="Fraser C.M."/>
        </authorList>
    </citation>
    <scope>NUCLEOTIDE SEQUENCE [LARGE SCALE GENOMIC DNA]</scope>
    <source>
        <strain>ATCC BAA-334 / TIGR4</strain>
    </source>
</reference>
<feature type="chain" id="PRO_0000313454" description="DNA ligase">
    <location>
        <begin position="1"/>
        <end position="652"/>
    </location>
</feature>
<feature type="domain" description="BRCT" evidence="1">
    <location>
        <begin position="577"/>
        <end position="652"/>
    </location>
</feature>
<feature type="active site" description="N6-AMP-lysine intermediate" evidence="1">
    <location>
        <position position="109"/>
    </location>
</feature>
<feature type="binding site" evidence="1">
    <location>
        <begin position="29"/>
        <end position="33"/>
    </location>
    <ligand>
        <name>NAD(+)</name>
        <dbReference type="ChEBI" id="CHEBI:57540"/>
    </ligand>
</feature>
<feature type="binding site" evidence="1">
    <location>
        <begin position="78"/>
        <end position="79"/>
    </location>
    <ligand>
        <name>NAD(+)</name>
        <dbReference type="ChEBI" id="CHEBI:57540"/>
    </ligand>
</feature>
<feature type="binding site" evidence="1">
    <location>
        <position position="107"/>
    </location>
    <ligand>
        <name>NAD(+)</name>
        <dbReference type="ChEBI" id="CHEBI:57540"/>
    </ligand>
</feature>
<feature type="binding site" evidence="1">
    <location>
        <position position="130"/>
    </location>
    <ligand>
        <name>NAD(+)</name>
        <dbReference type="ChEBI" id="CHEBI:57540"/>
    </ligand>
</feature>
<feature type="binding site" evidence="1">
    <location>
        <position position="164"/>
    </location>
    <ligand>
        <name>NAD(+)</name>
        <dbReference type="ChEBI" id="CHEBI:57540"/>
    </ligand>
</feature>
<feature type="binding site" evidence="1">
    <location>
        <position position="278"/>
    </location>
    <ligand>
        <name>NAD(+)</name>
        <dbReference type="ChEBI" id="CHEBI:57540"/>
    </ligand>
</feature>
<feature type="binding site" evidence="1">
    <location>
        <position position="302"/>
    </location>
    <ligand>
        <name>NAD(+)</name>
        <dbReference type="ChEBI" id="CHEBI:57540"/>
    </ligand>
</feature>
<feature type="binding site" evidence="1">
    <location>
        <position position="395"/>
    </location>
    <ligand>
        <name>Zn(2+)</name>
        <dbReference type="ChEBI" id="CHEBI:29105"/>
    </ligand>
</feature>
<feature type="binding site" evidence="1">
    <location>
        <position position="398"/>
    </location>
    <ligand>
        <name>Zn(2+)</name>
        <dbReference type="ChEBI" id="CHEBI:29105"/>
    </ligand>
</feature>
<feature type="binding site" evidence="1">
    <location>
        <position position="413"/>
    </location>
    <ligand>
        <name>Zn(2+)</name>
        <dbReference type="ChEBI" id="CHEBI:29105"/>
    </ligand>
</feature>
<feature type="binding site" evidence="1">
    <location>
        <position position="418"/>
    </location>
    <ligand>
        <name>Zn(2+)</name>
        <dbReference type="ChEBI" id="CHEBI:29105"/>
    </ligand>
</feature>
<keyword id="KW-0227">DNA damage</keyword>
<keyword id="KW-0234">DNA repair</keyword>
<keyword id="KW-0235">DNA replication</keyword>
<keyword id="KW-0436">Ligase</keyword>
<keyword id="KW-0460">Magnesium</keyword>
<keyword id="KW-0464">Manganese</keyword>
<keyword id="KW-0479">Metal-binding</keyword>
<keyword id="KW-0520">NAD</keyword>
<keyword id="KW-1185">Reference proteome</keyword>
<keyword id="KW-0862">Zinc</keyword>
<evidence type="ECO:0000255" key="1">
    <source>
        <dbReference type="HAMAP-Rule" id="MF_01588"/>
    </source>
</evidence>
<gene>
    <name evidence="1" type="primary">ligA</name>
    <name type="ordered locus">SP_1117</name>
</gene>
<sequence length="652" mass="72189">MNKRMNELVALLNRYATEYYTSDNPSVSDSEYDRLYRELVELETAYPEQVLADSPTHRVGGKVLDGFEKYSHQYPLYSLQDAFSCEELDAFDARVRKEVAHPTYICELKIDGLSISLTYEKGILVAGVTRGDGSIGENITENLKRVKDIPLTLPEELDITVRGECYMPRASFDQVNQARQENGEPEFANPRNAAAGTLRQLDTAVVAKRNLATFLYQEASPSTRDSQEKGLKYLEQLGFVVNPKRILAENIDEIWNFIQEVGQERENLPYDIDGVVIKVNDLASQEELGFTVKAPKWAVAYKFPAEEKEAQLLSVDWTVGRTGVVTPTANLTPVQLAGTTVSRATLHNVDYIAEKDIRKDDTVIVYKAGDIIPAVLRVVESKRVSEEKLDIPTNCPSCNSDLLHFEDEVALRCINPRCPAQIMEGLIHFASRDAMNITGLGPSIVEKLFAANLVKDVADIYRLQEEDFLLLEGVKEKSAAKLYQAIQASKENSAEKLLFGLGIRHVGSKVSQLLLQYFHSIENLSQADSEEVASIESLGGVIAKSLQTYFATEGSEILLRELKETGVNLDYKGQTVVADAALSGLTVVLTGKLERLKRSEAKSKLESLGAKVTGSISKKTDLVVVGADAGSKLQKAQELGIQVRDEAWLESL</sequence>
<dbReference type="EC" id="6.5.1.2" evidence="1"/>
<dbReference type="EMBL" id="AE005672">
    <property type="protein sequence ID" value="AAK75228.1"/>
    <property type="molecule type" value="Genomic_DNA"/>
</dbReference>
<dbReference type="PIR" id="C95129">
    <property type="entry name" value="C95129"/>
</dbReference>
<dbReference type="RefSeq" id="WP_001042585.1">
    <property type="nucleotide sequence ID" value="NC_003028.3"/>
</dbReference>
<dbReference type="SMR" id="Q97QT2"/>
<dbReference type="PaxDb" id="170187-SP_1117"/>
<dbReference type="EnsemblBacteria" id="AAK75228">
    <property type="protein sequence ID" value="AAK75228"/>
    <property type="gene ID" value="SP_1117"/>
</dbReference>
<dbReference type="KEGG" id="spn:SP_1117"/>
<dbReference type="eggNOG" id="COG0272">
    <property type="taxonomic scope" value="Bacteria"/>
</dbReference>
<dbReference type="PhylomeDB" id="Q97QT2"/>
<dbReference type="BioCyc" id="SPNE170187:G1FZB-1142-MONOMER"/>
<dbReference type="Proteomes" id="UP000000585">
    <property type="component" value="Chromosome"/>
</dbReference>
<dbReference type="GO" id="GO:0005829">
    <property type="term" value="C:cytosol"/>
    <property type="evidence" value="ECO:0007669"/>
    <property type="project" value="TreeGrafter"/>
</dbReference>
<dbReference type="GO" id="GO:0003677">
    <property type="term" value="F:DNA binding"/>
    <property type="evidence" value="ECO:0007669"/>
    <property type="project" value="InterPro"/>
</dbReference>
<dbReference type="GO" id="GO:0003911">
    <property type="term" value="F:DNA ligase (NAD+) activity"/>
    <property type="evidence" value="ECO:0007669"/>
    <property type="project" value="UniProtKB-UniRule"/>
</dbReference>
<dbReference type="GO" id="GO:0046872">
    <property type="term" value="F:metal ion binding"/>
    <property type="evidence" value="ECO:0007669"/>
    <property type="project" value="UniProtKB-KW"/>
</dbReference>
<dbReference type="GO" id="GO:0006281">
    <property type="term" value="P:DNA repair"/>
    <property type="evidence" value="ECO:0007669"/>
    <property type="project" value="UniProtKB-KW"/>
</dbReference>
<dbReference type="GO" id="GO:0006260">
    <property type="term" value="P:DNA replication"/>
    <property type="evidence" value="ECO:0007669"/>
    <property type="project" value="UniProtKB-KW"/>
</dbReference>
<dbReference type="CDD" id="cd17748">
    <property type="entry name" value="BRCT_DNA_ligase_like"/>
    <property type="match status" value="1"/>
</dbReference>
<dbReference type="CDD" id="cd00114">
    <property type="entry name" value="LIGANc"/>
    <property type="match status" value="1"/>
</dbReference>
<dbReference type="FunFam" id="1.10.150.20:FF:000006">
    <property type="entry name" value="DNA ligase"/>
    <property type="match status" value="1"/>
</dbReference>
<dbReference type="FunFam" id="1.10.150.20:FF:000007">
    <property type="entry name" value="DNA ligase"/>
    <property type="match status" value="1"/>
</dbReference>
<dbReference type="FunFam" id="1.10.287.610:FF:000002">
    <property type="entry name" value="DNA ligase"/>
    <property type="match status" value="1"/>
</dbReference>
<dbReference type="FunFam" id="2.40.50.140:FF:000012">
    <property type="entry name" value="DNA ligase"/>
    <property type="match status" value="1"/>
</dbReference>
<dbReference type="FunFam" id="3.30.470.30:FF:000001">
    <property type="entry name" value="DNA ligase"/>
    <property type="match status" value="1"/>
</dbReference>
<dbReference type="Gene3D" id="6.20.10.30">
    <property type="match status" value="1"/>
</dbReference>
<dbReference type="Gene3D" id="1.10.150.20">
    <property type="entry name" value="5' to 3' exonuclease, C-terminal subdomain"/>
    <property type="match status" value="2"/>
</dbReference>
<dbReference type="Gene3D" id="3.40.50.10190">
    <property type="entry name" value="BRCT domain"/>
    <property type="match status" value="1"/>
</dbReference>
<dbReference type="Gene3D" id="3.30.470.30">
    <property type="entry name" value="DNA ligase/mRNA capping enzyme"/>
    <property type="match status" value="1"/>
</dbReference>
<dbReference type="Gene3D" id="1.10.287.610">
    <property type="entry name" value="Helix hairpin bin"/>
    <property type="match status" value="1"/>
</dbReference>
<dbReference type="Gene3D" id="2.40.50.140">
    <property type="entry name" value="Nucleic acid-binding proteins"/>
    <property type="match status" value="1"/>
</dbReference>
<dbReference type="HAMAP" id="MF_01588">
    <property type="entry name" value="DNA_ligase_A"/>
    <property type="match status" value="1"/>
</dbReference>
<dbReference type="InterPro" id="IPR001357">
    <property type="entry name" value="BRCT_dom"/>
</dbReference>
<dbReference type="InterPro" id="IPR036420">
    <property type="entry name" value="BRCT_dom_sf"/>
</dbReference>
<dbReference type="InterPro" id="IPR041663">
    <property type="entry name" value="DisA/LigA_HHH"/>
</dbReference>
<dbReference type="InterPro" id="IPR001679">
    <property type="entry name" value="DNA_ligase"/>
</dbReference>
<dbReference type="InterPro" id="IPR018239">
    <property type="entry name" value="DNA_ligase_AS"/>
</dbReference>
<dbReference type="InterPro" id="IPR033136">
    <property type="entry name" value="DNA_ligase_CS"/>
</dbReference>
<dbReference type="InterPro" id="IPR013839">
    <property type="entry name" value="DNAligase_adenylation"/>
</dbReference>
<dbReference type="InterPro" id="IPR013840">
    <property type="entry name" value="DNAligase_N"/>
</dbReference>
<dbReference type="InterPro" id="IPR003583">
    <property type="entry name" value="Hlx-hairpin-Hlx_DNA-bd_motif"/>
</dbReference>
<dbReference type="InterPro" id="IPR012340">
    <property type="entry name" value="NA-bd_OB-fold"/>
</dbReference>
<dbReference type="InterPro" id="IPR004150">
    <property type="entry name" value="NAD_DNA_ligase_OB"/>
</dbReference>
<dbReference type="InterPro" id="IPR010994">
    <property type="entry name" value="RuvA_2-like"/>
</dbReference>
<dbReference type="InterPro" id="IPR004149">
    <property type="entry name" value="Znf_DNAligase_C4"/>
</dbReference>
<dbReference type="NCBIfam" id="TIGR00575">
    <property type="entry name" value="dnlj"/>
    <property type="match status" value="1"/>
</dbReference>
<dbReference type="NCBIfam" id="NF005932">
    <property type="entry name" value="PRK07956.1"/>
    <property type="match status" value="1"/>
</dbReference>
<dbReference type="PANTHER" id="PTHR23389">
    <property type="entry name" value="CHROMOSOME TRANSMISSION FIDELITY FACTOR 18"/>
    <property type="match status" value="1"/>
</dbReference>
<dbReference type="PANTHER" id="PTHR23389:SF9">
    <property type="entry name" value="DNA LIGASE"/>
    <property type="match status" value="1"/>
</dbReference>
<dbReference type="Pfam" id="PF00533">
    <property type="entry name" value="BRCT"/>
    <property type="match status" value="1"/>
</dbReference>
<dbReference type="Pfam" id="PF01653">
    <property type="entry name" value="DNA_ligase_aden"/>
    <property type="match status" value="1"/>
</dbReference>
<dbReference type="Pfam" id="PF03120">
    <property type="entry name" value="DNA_ligase_OB"/>
    <property type="match status" value="1"/>
</dbReference>
<dbReference type="Pfam" id="PF03119">
    <property type="entry name" value="DNA_ligase_ZBD"/>
    <property type="match status" value="1"/>
</dbReference>
<dbReference type="Pfam" id="PF12826">
    <property type="entry name" value="HHH_2"/>
    <property type="match status" value="1"/>
</dbReference>
<dbReference type="Pfam" id="PF14520">
    <property type="entry name" value="HHH_5"/>
    <property type="match status" value="1"/>
</dbReference>
<dbReference type="PIRSF" id="PIRSF001604">
    <property type="entry name" value="LigA"/>
    <property type="match status" value="1"/>
</dbReference>
<dbReference type="SMART" id="SM00292">
    <property type="entry name" value="BRCT"/>
    <property type="match status" value="1"/>
</dbReference>
<dbReference type="SMART" id="SM00278">
    <property type="entry name" value="HhH1"/>
    <property type="match status" value="2"/>
</dbReference>
<dbReference type="SMART" id="SM00532">
    <property type="entry name" value="LIGANc"/>
    <property type="match status" value="1"/>
</dbReference>
<dbReference type="SUPFAM" id="SSF52113">
    <property type="entry name" value="BRCT domain"/>
    <property type="match status" value="1"/>
</dbReference>
<dbReference type="SUPFAM" id="SSF56091">
    <property type="entry name" value="DNA ligase/mRNA capping enzyme, catalytic domain"/>
    <property type="match status" value="1"/>
</dbReference>
<dbReference type="SUPFAM" id="SSF50249">
    <property type="entry name" value="Nucleic acid-binding proteins"/>
    <property type="match status" value="1"/>
</dbReference>
<dbReference type="SUPFAM" id="SSF47781">
    <property type="entry name" value="RuvA domain 2-like"/>
    <property type="match status" value="1"/>
</dbReference>
<dbReference type="PROSITE" id="PS50172">
    <property type="entry name" value="BRCT"/>
    <property type="match status" value="1"/>
</dbReference>
<dbReference type="PROSITE" id="PS01055">
    <property type="entry name" value="DNA_LIGASE_N1"/>
    <property type="match status" value="1"/>
</dbReference>
<dbReference type="PROSITE" id="PS01056">
    <property type="entry name" value="DNA_LIGASE_N2"/>
    <property type="match status" value="1"/>
</dbReference>
<proteinExistence type="inferred from homology"/>
<organism>
    <name type="scientific">Streptococcus pneumoniae serotype 4 (strain ATCC BAA-334 / TIGR4)</name>
    <dbReference type="NCBI Taxonomy" id="170187"/>
    <lineage>
        <taxon>Bacteria</taxon>
        <taxon>Bacillati</taxon>
        <taxon>Bacillota</taxon>
        <taxon>Bacilli</taxon>
        <taxon>Lactobacillales</taxon>
        <taxon>Streptococcaceae</taxon>
        <taxon>Streptococcus</taxon>
    </lineage>
</organism>